<gene>
    <name type="primary">acyP</name>
    <name type="ordered locus">TDE_0797</name>
</gene>
<comment type="catalytic activity">
    <reaction>
        <text>an acyl phosphate + H2O = a carboxylate + phosphate + H(+)</text>
        <dbReference type="Rhea" id="RHEA:14965"/>
        <dbReference type="ChEBI" id="CHEBI:15377"/>
        <dbReference type="ChEBI" id="CHEBI:15378"/>
        <dbReference type="ChEBI" id="CHEBI:29067"/>
        <dbReference type="ChEBI" id="CHEBI:43474"/>
        <dbReference type="ChEBI" id="CHEBI:59918"/>
        <dbReference type="EC" id="3.6.1.7"/>
    </reaction>
</comment>
<comment type="similarity">
    <text evidence="2">Belongs to the acylphosphatase family.</text>
</comment>
<accession>Q73PK2</accession>
<organism>
    <name type="scientific">Treponema denticola (strain ATCC 35405 / DSM 14222 / CIP 103919 / JCM 8153 / KCTC 15104)</name>
    <dbReference type="NCBI Taxonomy" id="243275"/>
    <lineage>
        <taxon>Bacteria</taxon>
        <taxon>Pseudomonadati</taxon>
        <taxon>Spirochaetota</taxon>
        <taxon>Spirochaetia</taxon>
        <taxon>Spirochaetales</taxon>
        <taxon>Treponemataceae</taxon>
        <taxon>Treponema</taxon>
    </lineage>
</organism>
<evidence type="ECO:0000255" key="1">
    <source>
        <dbReference type="PROSITE-ProRule" id="PRU00520"/>
    </source>
</evidence>
<evidence type="ECO:0000305" key="2"/>
<dbReference type="EC" id="3.6.1.7"/>
<dbReference type="EMBL" id="AE017226">
    <property type="protein sequence ID" value="AAS11288.1"/>
    <property type="molecule type" value="Genomic_DNA"/>
</dbReference>
<dbReference type="RefSeq" id="NP_971407.1">
    <property type="nucleotide sequence ID" value="NC_002967.9"/>
</dbReference>
<dbReference type="RefSeq" id="WP_002672192.1">
    <property type="nucleotide sequence ID" value="NC_002967.9"/>
</dbReference>
<dbReference type="SMR" id="Q73PK2"/>
<dbReference type="STRING" id="243275.TDE_0797"/>
<dbReference type="PaxDb" id="243275-TDE_0797"/>
<dbReference type="GeneID" id="2740675"/>
<dbReference type="KEGG" id="tde:TDE_0797"/>
<dbReference type="PATRIC" id="fig|243275.7.peg.770"/>
<dbReference type="eggNOG" id="COG1254">
    <property type="taxonomic scope" value="Bacteria"/>
</dbReference>
<dbReference type="HOGENOM" id="CLU_141932_2_1_12"/>
<dbReference type="OrthoDB" id="9808093at2"/>
<dbReference type="Proteomes" id="UP000008212">
    <property type="component" value="Chromosome"/>
</dbReference>
<dbReference type="GO" id="GO:0003998">
    <property type="term" value="F:acylphosphatase activity"/>
    <property type="evidence" value="ECO:0007669"/>
    <property type="project" value="UniProtKB-EC"/>
</dbReference>
<dbReference type="Gene3D" id="3.30.70.100">
    <property type="match status" value="1"/>
</dbReference>
<dbReference type="InterPro" id="IPR020456">
    <property type="entry name" value="Acylphosphatase"/>
</dbReference>
<dbReference type="InterPro" id="IPR001792">
    <property type="entry name" value="Acylphosphatase-like_dom"/>
</dbReference>
<dbReference type="InterPro" id="IPR036046">
    <property type="entry name" value="Acylphosphatase-like_dom_sf"/>
</dbReference>
<dbReference type="InterPro" id="IPR017968">
    <property type="entry name" value="Acylphosphatase_CS"/>
</dbReference>
<dbReference type="PANTHER" id="PTHR47268">
    <property type="entry name" value="ACYLPHOSPHATASE"/>
    <property type="match status" value="1"/>
</dbReference>
<dbReference type="PANTHER" id="PTHR47268:SF4">
    <property type="entry name" value="ACYLPHOSPHATASE"/>
    <property type="match status" value="1"/>
</dbReference>
<dbReference type="Pfam" id="PF00708">
    <property type="entry name" value="Acylphosphatase"/>
    <property type="match status" value="1"/>
</dbReference>
<dbReference type="SUPFAM" id="SSF54975">
    <property type="entry name" value="Acylphosphatase/BLUF domain-like"/>
    <property type="match status" value="1"/>
</dbReference>
<dbReference type="PROSITE" id="PS00150">
    <property type="entry name" value="ACYLPHOSPHATASE_1"/>
    <property type="match status" value="1"/>
</dbReference>
<dbReference type="PROSITE" id="PS51160">
    <property type="entry name" value="ACYLPHOSPHATASE_3"/>
    <property type="match status" value="1"/>
</dbReference>
<sequence>MDKETLRALHVIVKGRVQGVGFRYWTRSLAKSLNVKGRVRNLADYSVEIIAEADTDTLGEFVYALKHEHPYARVESLNSEEVRARGYTDFRIEV</sequence>
<reference key="1">
    <citation type="journal article" date="2004" name="Proc. Natl. Acad. Sci. U.S.A.">
        <title>Comparison of the genome of the oral pathogen Treponema denticola with other spirochete genomes.</title>
        <authorList>
            <person name="Seshadri R."/>
            <person name="Myers G.S.A."/>
            <person name="Tettelin H."/>
            <person name="Eisen J.A."/>
            <person name="Heidelberg J.F."/>
            <person name="Dodson R.J."/>
            <person name="Davidsen T.M."/>
            <person name="DeBoy R.T."/>
            <person name="Fouts D.E."/>
            <person name="Haft D.H."/>
            <person name="Selengut J."/>
            <person name="Ren Q."/>
            <person name="Brinkac L.M."/>
            <person name="Madupu R."/>
            <person name="Kolonay J.F."/>
            <person name="Durkin S.A."/>
            <person name="Daugherty S.C."/>
            <person name="Shetty J."/>
            <person name="Shvartsbeyn A."/>
            <person name="Gebregeorgis E."/>
            <person name="Geer K."/>
            <person name="Tsegaye G."/>
            <person name="Malek J.A."/>
            <person name="Ayodeji B."/>
            <person name="Shatsman S."/>
            <person name="McLeod M.P."/>
            <person name="Smajs D."/>
            <person name="Howell J.K."/>
            <person name="Pal S."/>
            <person name="Amin A."/>
            <person name="Vashisth P."/>
            <person name="McNeill T.Z."/>
            <person name="Xiang Q."/>
            <person name="Sodergren E."/>
            <person name="Baca E."/>
            <person name="Weinstock G.M."/>
            <person name="Norris S.J."/>
            <person name="Fraser C.M."/>
            <person name="Paulsen I.T."/>
        </authorList>
    </citation>
    <scope>NUCLEOTIDE SEQUENCE [LARGE SCALE GENOMIC DNA]</scope>
    <source>
        <strain>ATCC 35405 / DSM 14222 / CIP 103919 / JCM 8153 / KCTC 15104</strain>
    </source>
</reference>
<feature type="chain" id="PRO_0000326838" description="Acylphosphatase">
    <location>
        <begin position="1"/>
        <end position="94"/>
    </location>
</feature>
<feature type="domain" description="Acylphosphatase-like" evidence="1">
    <location>
        <begin position="8"/>
        <end position="94"/>
    </location>
</feature>
<feature type="active site" evidence="1">
    <location>
        <position position="23"/>
    </location>
</feature>
<feature type="active site" evidence="1">
    <location>
        <position position="41"/>
    </location>
</feature>
<proteinExistence type="inferred from homology"/>
<protein>
    <recommendedName>
        <fullName>Acylphosphatase</fullName>
        <ecNumber>3.6.1.7</ecNumber>
    </recommendedName>
    <alternativeName>
        <fullName>Acylphosphate phosphohydrolase</fullName>
    </alternativeName>
</protein>
<keyword id="KW-0378">Hydrolase</keyword>
<keyword id="KW-1185">Reference proteome</keyword>
<name>ACYP_TREDE</name>